<protein>
    <recommendedName>
        <fullName evidence="1">Argininosuccinate lyase</fullName>
        <shortName evidence="1">ASAL</shortName>
        <ecNumber evidence="1">4.3.2.1</ecNumber>
    </recommendedName>
    <alternativeName>
        <fullName evidence="1">Arginosuccinase</fullName>
    </alternativeName>
</protein>
<accession>Q4J8F0</accession>
<name>ARLY_SULAC</name>
<comment type="catalytic activity">
    <reaction evidence="1">
        <text>2-(N(omega)-L-arginino)succinate = fumarate + L-arginine</text>
        <dbReference type="Rhea" id="RHEA:24020"/>
        <dbReference type="ChEBI" id="CHEBI:29806"/>
        <dbReference type="ChEBI" id="CHEBI:32682"/>
        <dbReference type="ChEBI" id="CHEBI:57472"/>
        <dbReference type="EC" id="4.3.2.1"/>
    </reaction>
</comment>
<comment type="pathway">
    <text evidence="1">Amino-acid biosynthesis; L-arginine biosynthesis; L-arginine from L-ornithine and carbamoyl phosphate: step 3/3.</text>
</comment>
<comment type="subcellular location">
    <subcellularLocation>
        <location evidence="1">Cytoplasm</location>
    </subcellularLocation>
</comment>
<comment type="similarity">
    <text evidence="1">Belongs to the lyase 1 family. Argininosuccinate lyase subfamily.</text>
</comment>
<evidence type="ECO:0000255" key="1">
    <source>
        <dbReference type="HAMAP-Rule" id="MF_00006"/>
    </source>
</evidence>
<feature type="chain" id="PRO_0000137869" description="Argininosuccinate lyase">
    <location>
        <begin position="1"/>
        <end position="447"/>
    </location>
</feature>
<sequence length="447" mass="50950">MLYRRWGSDKDFVISYTSSNESDKEIVEEVKLTLKAHVIELYLSNYISKDTAKKIIRAINSFKDYPSSGYEDVHEALEDYIIKNIGEEGGWVGLGRSRNDHVATALRLRTREYIFDIMEELYLLRKSLIEQAKKNLNTIMPSYTHFQPAQPTTLAHYFMYLEEELNTPWEALFNSLKLINRSPLGSGAIVGSNVKIDRKREAELLGFDDVLYNTISSTSSRIDFINAISSLTLLMLVLSRFAEDMILLSSMFVNIIKLPDSHVSTSSLMPQKRNSVTMEILRTKVGECYGDLSSLMMIYKGLPSGYNLDLQEMNKHYWNCIKHVIPSIHITRDIIQNIQIKNFGEIQGLTATDLAEEMAISGIPYRKAYIDVANKIKAGTFVAGISYTKSIENKKVIGSPNPSLLTQEIEIKEKRLNNQHEKFKQYKESVIEKMGQLGVIEDGLLQQ</sequence>
<gene>
    <name evidence="1" type="primary">argH</name>
    <name type="ordered locus">Saci_1618</name>
</gene>
<reference key="1">
    <citation type="journal article" date="2005" name="J. Bacteriol.">
        <title>The genome of Sulfolobus acidocaldarius, a model organism of the Crenarchaeota.</title>
        <authorList>
            <person name="Chen L."/>
            <person name="Bruegger K."/>
            <person name="Skovgaard M."/>
            <person name="Redder P."/>
            <person name="She Q."/>
            <person name="Torarinsson E."/>
            <person name="Greve B."/>
            <person name="Awayez M."/>
            <person name="Zibat A."/>
            <person name="Klenk H.-P."/>
            <person name="Garrett R.A."/>
        </authorList>
    </citation>
    <scope>NUCLEOTIDE SEQUENCE [LARGE SCALE GENOMIC DNA]</scope>
    <source>
        <strain>ATCC 33909 / DSM 639 / JCM 8929 / NBRC 15157 / NCIMB 11770</strain>
    </source>
</reference>
<organism>
    <name type="scientific">Sulfolobus acidocaldarius (strain ATCC 33909 / DSM 639 / JCM 8929 / NBRC 15157 / NCIMB 11770)</name>
    <dbReference type="NCBI Taxonomy" id="330779"/>
    <lineage>
        <taxon>Archaea</taxon>
        <taxon>Thermoproteota</taxon>
        <taxon>Thermoprotei</taxon>
        <taxon>Sulfolobales</taxon>
        <taxon>Sulfolobaceae</taxon>
        <taxon>Sulfolobus</taxon>
    </lineage>
</organism>
<proteinExistence type="inferred from homology"/>
<dbReference type="EC" id="4.3.2.1" evidence="1"/>
<dbReference type="EMBL" id="CP000077">
    <property type="protein sequence ID" value="AAY80930.1"/>
    <property type="molecule type" value="Genomic_DNA"/>
</dbReference>
<dbReference type="RefSeq" id="WP_011278432.1">
    <property type="nucleotide sequence ID" value="NC_007181.1"/>
</dbReference>
<dbReference type="SMR" id="Q4J8F0"/>
<dbReference type="STRING" id="330779.Saci_1618"/>
<dbReference type="GeneID" id="14552111"/>
<dbReference type="GeneID" id="78441961"/>
<dbReference type="KEGG" id="sai:Saci_1618"/>
<dbReference type="PATRIC" id="fig|330779.12.peg.1557"/>
<dbReference type="eggNOG" id="arCOG01748">
    <property type="taxonomic scope" value="Archaea"/>
</dbReference>
<dbReference type="HOGENOM" id="CLU_027272_2_3_2"/>
<dbReference type="UniPathway" id="UPA00068">
    <property type="reaction ID" value="UER00114"/>
</dbReference>
<dbReference type="Proteomes" id="UP000001018">
    <property type="component" value="Chromosome"/>
</dbReference>
<dbReference type="GO" id="GO:0005829">
    <property type="term" value="C:cytosol"/>
    <property type="evidence" value="ECO:0007669"/>
    <property type="project" value="TreeGrafter"/>
</dbReference>
<dbReference type="GO" id="GO:0004056">
    <property type="term" value="F:argininosuccinate lyase activity"/>
    <property type="evidence" value="ECO:0007669"/>
    <property type="project" value="UniProtKB-UniRule"/>
</dbReference>
<dbReference type="GO" id="GO:0042450">
    <property type="term" value="P:arginine biosynthetic process via ornithine"/>
    <property type="evidence" value="ECO:0007669"/>
    <property type="project" value="InterPro"/>
</dbReference>
<dbReference type="GO" id="GO:0006526">
    <property type="term" value="P:L-arginine biosynthetic process"/>
    <property type="evidence" value="ECO:0007669"/>
    <property type="project" value="UniProtKB-UniRule"/>
</dbReference>
<dbReference type="CDD" id="cd01359">
    <property type="entry name" value="Argininosuccinate_lyase"/>
    <property type="match status" value="1"/>
</dbReference>
<dbReference type="Gene3D" id="1.10.40.30">
    <property type="entry name" value="Fumarase/aspartase (C-terminal domain)"/>
    <property type="match status" value="1"/>
</dbReference>
<dbReference type="Gene3D" id="1.20.200.10">
    <property type="entry name" value="Fumarase/aspartase (Central domain)"/>
    <property type="match status" value="1"/>
</dbReference>
<dbReference type="Gene3D" id="1.10.275.10">
    <property type="entry name" value="Fumarase/aspartase (N-terminal domain)"/>
    <property type="match status" value="1"/>
</dbReference>
<dbReference type="HAMAP" id="MF_00006">
    <property type="entry name" value="Arg_succ_lyase"/>
    <property type="match status" value="1"/>
</dbReference>
<dbReference type="InterPro" id="IPR009049">
    <property type="entry name" value="Argininosuccinate_lyase"/>
</dbReference>
<dbReference type="InterPro" id="IPR024083">
    <property type="entry name" value="Fumarase/histidase_N"/>
</dbReference>
<dbReference type="InterPro" id="IPR000362">
    <property type="entry name" value="Fumarate_lyase_fam"/>
</dbReference>
<dbReference type="InterPro" id="IPR022761">
    <property type="entry name" value="Fumarate_lyase_N"/>
</dbReference>
<dbReference type="InterPro" id="IPR008948">
    <property type="entry name" value="L-Aspartase-like"/>
</dbReference>
<dbReference type="NCBIfam" id="TIGR00838">
    <property type="entry name" value="argH"/>
    <property type="match status" value="1"/>
</dbReference>
<dbReference type="PANTHER" id="PTHR43814">
    <property type="entry name" value="ARGININOSUCCINATE LYASE"/>
    <property type="match status" value="1"/>
</dbReference>
<dbReference type="PANTHER" id="PTHR43814:SF1">
    <property type="entry name" value="ARGININOSUCCINATE LYASE"/>
    <property type="match status" value="1"/>
</dbReference>
<dbReference type="Pfam" id="PF00206">
    <property type="entry name" value="Lyase_1"/>
    <property type="match status" value="1"/>
</dbReference>
<dbReference type="PRINTS" id="PR00145">
    <property type="entry name" value="ARGSUCLYASE"/>
</dbReference>
<dbReference type="PRINTS" id="PR00149">
    <property type="entry name" value="FUMRATELYASE"/>
</dbReference>
<dbReference type="SUPFAM" id="SSF48557">
    <property type="entry name" value="L-aspartase-like"/>
    <property type="match status" value="1"/>
</dbReference>
<keyword id="KW-0028">Amino-acid biosynthesis</keyword>
<keyword id="KW-0055">Arginine biosynthesis</keyword>
<keyword id="KW-0963">Cytoplasm</keyword>
<keyword id="KW-0456">Lyase</keyword>
<keyword id="KW-1185">Reference proteome</keyword>